<name>ATPA_PAEAT</name>
<gene>
    <name evidence="1" type="primary">atpA</name>
    <name type="ordered locus">AAur_2596</name>
</gene>
<sequence>MAELTINADDVRNALNEFAASYEPGNAERVEVGRVTTASDGIARVEGLPSVMANELLRFEDGTLGLAQNLDVREIGVIILGDFTGIEEGQEVHRTGEILSVPVGDAFLGRVVDPLGQPIDDLGEIKAEATRALELQAPGVTERKSVHEPMQTGLKAIDAMIPIGRGQRQLIIGDRQTGKTAIAVDTIINQKANWASGDVTKQVRCVYVGVGQKASTIAAVRQTLEDHGALEYTTIVASPASDPAGFKYLAPYAGSAIGQHWMYGGKHVLVIFDDLSKQAEAYRAVSLLLRRPPGREAYPGDVFYLHSRLLERCAKLSDELGAGSMTGLPIVETKANDVSAYIPTNVISITDGQIFLQSDLFNANQRPAVDVGVSVSRVGGAAQVKSMKKVSGTLKLDLAQYRDMQAFAMFASDLDAASRQQLTRGARLMELLKQGQYSPFPVENQVVSIWAGTNGYLDDVPVEDISRFESEFLEHLTHKSSILTTLAQTNVLDDDTAAALKEAIVSFKKGFFGEGDNHLVGAGHEEHAAISGGDVDQEKIVKQKR</sequence>
<accession>A1R7V5</accession>
<evidence type="ECO:0000255" key="1">
    <source>
        <dbReference type="HAMAP-Rule" id="MF_01346"/>
    </source>
</evidence>
<evidence type="ECO:0000305" key="2"/>
<protein>
    <recommendedName>
        <fullName evidence="1">ATP synthase subunit alpha</fullName>
        <ecNumber evidence="1">7.1.2.2</ecNumber>
    </recommendedName>
    <alternativeName>
        <fullName evidence="1">ATP synthase F1 sector subunit alpha</fullName>
    </alternativeName>
    <alternativeName>
        <fullName evidence="1">F-ATPase subunit alpha</fullName>
    </alternativeName>
</protein>
<keyword id="KW-0066">ATP synthesis</keyword>
<keyword id="KW-0067">ATP-binding</keyword>
<keyword id="KW-1003">Cell membrane</keyword>
<keyword id="KW-0139">CF(1)</keyword>
<keyword id="KW-0375">Hydrogen ion transport</keyword>
<keyword id="KW-0406">Ion transport</keyword>
<keyword id="KW-0472">Membrane</keyword>
<keyword id="KW-0547">Nucleotide-binding</keyword>
<keyword id="KW-1278">Translocase</keyword>
<keyword id="KW-0813">Transport</keyword>
<comment type="function">
    <text evidence="1">Produces ATP from ADP in the presence of a proton gradient across the membrane. The alpha chain is a regulatory subunit.</text>
</comment>
<comment type="catalytic activity">
    <reaction evidence="1">
        <text>ATP + H2O + 4 H(+)(in) = ADP + phosphate + 5 H(+)(out)</text>
        <dbReference type="Rhea" id="RHEA:57720"/>
        <dbReference type="ChEBI" id="CHEBI:15377"/>
        <dbReference type="ChEBI" id="CHEBI:15378"/>
        <dbReference type="ChEBI" id="CHEBI:30616"/>
        <dbReference type="ChEBI" id="CHEBI:43474"/>
        <dbReference type="ChEBI" id="CHEBI:456216"/>
        <dbReference type="EC" id="7.1.2.2"/>
    </reaction>
</comment>
<comment type="subunit">
    <text evidence="1">F-type ATPases have 2 components, CF(1) - the catalytic core - and CF(0) - the membrane proton channel. CF(1) has five subunits: alpha(3), beta(3), gamma(1), delta(1), epsilon(1). CF(0) has three main subunits: a(1), b(2) and c(9-12). The alpha and beta chains form an alternating ring which encloses part of the gamma chain. CF(1) is attached to CF(0) by a central stalk formed by the gamma and epsilon chains, while a peripheral stalk is formed by the delta and b chains.</text>
</comment>
<comment type="subcellular location">
    <subcellularLocation>
        <location evidence="1">Cell membrane</location>
        <topology evidence="1">Peripheral membrane protein</topology>
    </subcellularLocation>
</comment>
<comment type="similarity">
    <text evidence="1">Belongs to the ATPase alpha/beta chains family.</text>
</comment>
<comment type="sequence caution" evidence="2">
    <conflict type="erroneous initiation">
        <sequence resource="EMBL-CDS" id="ABM07266"/>
    </conflict>
</comment>
<feature type="chain" id="PRO_0000339016" description="ATP synthase subunit alpha">
    <location>
        <begin position="1"/>
        <end position="545"/>
    </location>
</feature>
<feature type="binding site" evidence="1">
    <location>
        <begin position="173"/>
        <end position="180"/>
    </location>
    <ligand>
        <name>ATP</name>
        <dbReference type="ChEBI" id="CHEBI:30616"/>
    </ligand>
</feature>
<feature type="site" description="Required for activity" evidence="1">
    <location>
        <position position="374"/>
    </location>
</feature>
<proteinExistence type="inferred from homology"/>
<dbReference type="EC" id="7.1.2.2" evidence="1"/>
<dbReference type="EMBL" id="CP000474">
    <property type="protein sequence ID" value="ABM07266.1"/>
    <property type="status" value="ALT_INIT"/>
    <property type="molecule type" value="Genomic_DNA"/>
</dbReference>
<dbReference type="RefSeq" id="WP_011775259.1">
    <property type="nucleotide sequence ID" value="NC_008711.1"/>
</dbReference>
<dbReference type="SMR" id="A1R7V5"/>
<dbReference type="STRING" id="290340.AAur_2596"/>
<dbReference type="GeneID" id="84018638"/>
<dbReference type="KEGG" id="aau:AAur_2596"/>
<dbReference type="eggNOG" id="COG0056">
    <property type="taxonomic scope" value="Bacteria"/>
</dbReference>
<dbReference type="HOGENOM" id="CLU_010091_2_1_11"/>
<dbReference type="OrthoDB" id="9803053at2"/>
<dbReference type="Proteomes" id="UP000000637">
    <property type="component" value="Chromosome"/>
</dbReference>
<dbReference type="GO" id="GO:0005886">
    <property type="term" value="C:plasma membrane"/>
    <property type="evidence" value="ECO:0007669"/>
    <property type="project" value="UniProtKB-SubCell"/>
</dbReference>
<dbReference type="GO" id="GO:0045259">
    <property type="term" value="C:proton-transporting ATP synthase complex"/>
    <property type="evidence" value="ECO:0007669"/>
    <property type="project" value="UniProtKB-KW"/>
</dbReference>
<dbReference type="GO" id="GO:0043531">
    <property type="term" value="F:ADP binding"/>
    <property type="evidence" value="ECO:0007669"/>
    <property type="project" value="TreeGrafter"/>
</dbReference>
<dbReference type="GO" id="GO:0005524">
    <property type="term" value="F:ATP binding"/>
    <property type="evidence" value="ECO:0007669"/>
    <property type="project" value="UniProtKB-UniRule"/>
</dbReference>
<dbReference type="GO" id="GO:0046933">
    <property type="term" value="F:proton-transporting ATP synthase activity, rotational mechanism"/>
    <property type="evidence" value="ECO:0007669"/>
    <property type="project" value="UniProtKB-UniRule"/>
</dbReference>
<dbReference type="CDD" id="cd18113">
    <property type="entry name" value="ATP-synt_F1_alpha_C"/>
    <property type="match status" value="1"/>
</dbReference>
<dbReference type="CDD" id="cd18116">
    <property type="entry name" value="ATP-synt_F1_alpha_N"/>
    <property type="match status" value="1"/>
</dbReference>
<dbReference type="CDD" id="cd01132">
    <property type="entry name" value="F1-ATPase_alpha_CD"/>
    <property type="match status" value="1"/>
</dbReference>
<dbReference type="FunFam" id="1.20.150.20:FF:000001">
    <property type="entry name" value="ATP synthase subunit alpha"/>
    <property type="match status" value="1"/>
</dbReference>
<dbReference type="FunFam" id="3.40.50.300:FF:000002">
    <property type="entry name" value="ATP synthase subunit alpha"/>
    <property type="match status" value="1"/>
</dbReference>
<dbReference type="Gene3D" id="2.40.30.20">
    <property type="match status" value="1"/>
</dbReference>
<dbReference type="Gene3D" id="1.20.150.20">
    <property type="entry name" value="ATP synthase alpha/beta chain, C-terminal domain"/>
    <property type="match status" value="1"/>
</dbReference>
<dbReference type="Gene3D" id="3.40.50.300">
    <property type="entry name" value="P-loop containing nucleotide triphosphate hydrolases"/>
    <property type="match status" value="1"/>
</dbReference>
<dbReference type="HAMAP" id="MF_01346">
    <property type="entry name" value="ATP_synth_alpha_bact"/>
    <property type="match status" value="1"/>
</dbReference>
<dbReference type="InterPro" id="IPR023366">
    <property type="entry name" value="ATP_synth_asu-like_sf"/>
</dbReference>
<dbReference type="InterPro" id="IPR000793">
    <property type="entry name" value="ATP_synth_asu_C"/>
</dbReference>
<dbReference type="InterPro" id="IPR038376">
    <property type="entry name" value="ATP_synth_asu_C_sf"/>
</dbReference>
<dbReference type="InterPro" id="IPR033732">
    <property type="entry name" value="ATP_synth_F1_a_nt-bd_dom"/>
</dbReference>
<dbReference type="InterPro" id="IPR005294">
    <property type="entry name" value="ATP_synth_F1_asu"/>
</dbReference>
<dbReference type="InterPro" id="IPR020003">
    <property type="entry name" value="ATPase_a/bsu_AS"/>
</dbReference>
<dbReference type="InterPro" id="IPR004100">
    <property type="entry name" value="ATPase_F1/V1/A1_a/bsu_N"/>
</dbReference>
<dbReference type="InterPro" id="IPR036121">
    <property type="entry name" value="ATPase_F1/V1/A1_a/bsu_N_sf"/>
</dbReference>
<dbReference type="InterPro" id="IPR000194">
    <property type="entry name" value="ATPase_F1/V1/A1_a/bsu_nucl-bd"/>
</dbReference>
<dbReference type="InterPro" id="IPR027417">
    <property type="entry name" value="P-loop_NTPase"/>
</dbReference>
<dbReference type="NCBIfam" id="TIGR00962">
    <property type="entry name" value="atpA"/>
    <property type="match status" value="1"/>
</dbReference>
<dbReference type="NCBIfam" id="NF009884">
    <property type="entry name" value="PRK13343.1"/>
    <property type="match status" value="1"/>
</dbReference>
<dbReference type="PANTHER" id="PTHR48082">
    <property type="entry name" value="ATP SYNTHASE SUBUNIT ALPHA, MITOCHONDRIAL"/>
    <property type="match status" value="1"/>
</dbReference>
<dbReference type="PANTHER" id="PTHR48082:SF2">
    <property type="entry name" value="ATP SYNTHASE SUBUNIT ALPHA, MITOCHONDRIAL"/>
    <property type="match status" value="1"/>
</dbReference>
<dbReference type="Pfam" id="PF00006">
    <property type="entry name" value="ATP-synt_ab"/>
    <property type="match status" value="1"/>
</dbReference>
<dbReference type="Pfam" id="PF00306">
    <property type="entry name" value="ATP-synt_ab_C"/>
    <property type="match status" value="1"/>
</dbReference>
<dbReference type="Pfam" id="PF02874">
    <property type="entry name" value="ATP-synt_ab_N"/>
    <property type="match status" value="1"/>
</dbReference>
<dbReference type="SUPFAM" id="SSF47917">
    <property type="entry name" value="C-terminal domain of alpha and beta subunits of F1 ATP synthase"/>
    <property type="match status" value="1"/>
</dbReference>
<dbReference type="SUPFAM" id="SSF50615">
    <property type="entry name" value="N-terminal domain of alpha and beta subunits of F1 ATP synthase"/>
    <property type="match status" value="1"/>
</dbReference>
<dbReference type="SUPFAM" id="SSF52540">
    <property type="entry name" value="P-loop containing nucleoside triphosphate hydrolases"/>
    <property type="match status" value="1"/>
</dbReference>
<dbReference type="PROSITE" id="PS00152">
    <property type="entry name" value="ATPASE_ALPHA_BETA"/>
    <property type="match status" value="1"/>
</dbReference>
<reference key="1">
    <citation type="journal article" date="2006" name="PLoS Genet.">
        <title>Secrets of soil survival revealed by the genome sequence of Arthrobacter aurescens TC1.</title>
        <authorList>
            <person name="Mongodin E.F."/>
            <person name="Shapir N."/>
            <person name="Daugherty S.C."/>
            <person name="DeBoy R.T."/>
            <person name="Emerson J.B."/>
            <person name="Shvartzbeyn A."/>
            <person name="Radune D."/>
            <person name="Vamathevan J."/>
            <person name="Riggs F."/>
            <person name="Grinberg V."/>
            <person name="Khouri H.M."/>
            <person name="Wackett L.P."/>
            <person name="Nelson K.E."/>
            <person name="Sadowsky M.J."/>
        </authorList>
    </citation>
    <scope>NUCLEOTIDE SEQUENCE [LARGE SCALE GENOMIC DNA]</scope>
    <source>
        <strain>TC1</strain>
    </source>
</reference>
<organism>
    <name type="scientific">Paenarthrobacter aurescens (strain TC1)</name>
    <dbReference type="NCBI Taxonomy" id="290340"/>
    <lineage>
        <taxon>Bacteria</taxon>
        <taxon>Bacillati</taxon>
        <taxon>Actinomycetota</taxon>
        <taxon>Actinomycetes</taxon>
        <taxon>Micrococcales</taxon>
        <taxon>Micrococcaceae</taxon>
        <taxon>Paenarthrobacter</taxon>
    </lineage>
</organism>